<accession>Q7XUJ2</accession>
<accession>Q0JBC4</accession>
<accession>Q25CH7</accession>
<accession>Q6R5L9</accession>
<comment type="function">
    <text evidence="1">May be involved in the transport of nicotianamine-chelated metals.</text>
</comment>
<comment type="subcellular location">
    <subcellularLocation>
        <location evidence="4">Membrane</location>
        <topology evidence="4">Multi-pass membrane protein</topology>
    </subcellularLocation>
</comment>
<comment type="similarity">
    <text evidence="4">Belongs to the YSL (TC 2.A.67.2) family.</text>
</comment>
<comment type="caution">
    <text evidence="4">It is uncertain whether Met-1 or Met-28 is the initiator.</text>
</comment>
<comment type="sequence caution" evidence="4">
    <conflict type="erroneous initiation">
        <sequence resource="EMBL-CDS" id="BAF15363"/>
    </conflict>
    <text>Truncated N-terminus.</text>
</comment>
<feature type="chain" id="PRO_0000363872" description="Probable metal-nicotianamine transporter YSL9">
    <location>
        <begin position="1"/>
        <end position="684"/>
    </location>
</feature>
<feature type="transmembrane region" description="Helical" evidence="2">
    <location>
        <begin position="58"/>
        <end position="78"/>
    </location>
</feature>
<feature type="transmembrane region" description="Helical" evidence="2">
    <location>
        <begin position="82"/>
        <end position="102"/>
    </location>
</feature>
<feature type="transmembrane region" description="Helical" evidence="2">
    <location>
        <begin position="130"/>
        <end position="150"/>
    </location>
</feature>
<feature type="transmembrane region" description="Helical" evidence="2">
    <location>
        <begin position="174"/>
        <end position="194"/>
    </location>
</feature>
<feature type="transmembrane region" description="Helical" evidence="2">
    <location>
        <begin position="234"/>
        <end position="254"/>
    </location>
</feature>
<feature type="transmembrane region" description="Helical" evidence="2">
    <location>
        <begin position="295"/>
        <end position="315"/>
    </location>
</feature>
<feature type="transmembrane region" description="Helical" evidence="2">
    <location>
        <begin position="341"/>
        <end position="361"/>
    </location>
</feature>
<feature type="transmembrane region" description="Helical" evidence="2">
    <location>
        <begin position="402"/>
        <end position="422"/>
    </location>
</feature>
<feature type="transmembrane region" description="Helical" evidence="2">
    <location>
        <begin position="430"/>
        <end position="450"/>
    </location>
</feature>
<feature type="transmembrane region" description="Helical" evidence="2">
    <location>
        <begin position="462"/>
        <end position="482"/>
    </location>
</feature>
<feature type="transmembrane region" description="Helical" evidence="2">
    <location>
        <begin position="515"/>
        <end position="535"/>
    </location>
</feature>
<feature type="transmembrane region" description="Helical" evidence="2">
    <location>
        <begin position="568"/>
        <end position="588"/>
    </location>
</feature>
<feature type="transmembrane region" description="Helical" evidence="2">
    <location>
        <begin position="612"/>
        <end position="632"/>
    </location>
</feature>
<feature type="transmembrane region" description="Helical" evidence="2">
    <location>
        <begin position="642"/>
        <end position="662"/>
    </location>
</feature>
<feature type="region of interest" description="Disordered" evidence="3">
    <location>
        <begin position="1"/>
        <end position="55"/>
    </location>
</feature>
<feature type="compositionally biased region" description="Basic residues" evidence="3">
    <location>
        <begin position="1"/>
        <end position="10"/>
    </location>
</feature>
<gene>
    <name type="primary">YSL9</name>
    <name type="ordered locus">Os04g0542200</name>
    <name type="ordered locus">LOC_Os04g45860</name>
    <name type="ORF">OSJNBb0103I08.11</name>
</gene>
<evidence type="ECO:0000250" key="1"/>
<evidence type="ECO:0000255" key="2"/>
<evidence type="ECO:0000256" key="3">
    <source>
        <dbReference type="SAM" id="MobiDB-lite"/>
    </source>
</evidence>
<evidence type="ECO:0000305" key="4"/>
<organism>
    <name type="scientific">Oryza sativa subsp. japonica</name>
    <name type="common">Rice</name>
    <dbReference type="NCBI Taxonomy" id="39947"/>
    <lineage>
        <taxon>Eukaryota</taxon>
        <taxon>Viridiplantae</taxon>
        <taxon>Streptophyta</taxon>
        <taxon>Embryophyta</taxon>
        <taxon>Tracheophyta</taxon>
        <taxon>Spermatophyta</taxon>
        <taxon>Magnoliopsida</taxon>
        <taxon>Liliopsida</taxon>
        <taxon>Poales</taxon>
        <taxon>Poaceae</taxon>
        <taxon>BOP clade</taxon>
        <taxon>Oryzoideae</taxon>
        <taxon>Oryzeae</taxon>
        <taxon>Oryzinae</taxon>
        <taxon>Oryza</taxon>
        <taxon>Oryza sativa</taxon>
    </lineage>
</organism>
<protein>
    <recommendedName>
        <fullName>Probable metal-nicotianamine transporter YSL9</fullName>
    </recommendedName>
    <alternativeName>
        <fullName>Protein YELLOW STRIPE LIKE 9</fullName>
        <shortName>OsYSL9</shortName>
    </alternativeName>
</protein>
<dbReference type="EMBL" id="AB190919">
    <property type="protein sequence ID" value="BAE91889.1"/>
    <property type="molecule type" value="mRNA"/>
</dbReference>
<dbReference type="EMBL" id="AY512581">
    <property type="protein sequence ID" value="AAS49493.1"/>
    <property type="molecule type" value="mRNA"/>
</dbReference>
<dbReference type="EMBL" id="AL606695">
    <property type="protein sequence ID" value="CAD41272.2"/>
    <property type="molecule type" value="Genomic_DNA"/>
</dbReference>
<dbReference type="EMBL" id="AP008210">
    <property type="protein sequence ID" value="BAF15363.2"/>
    <property type="status" value="ALT_INIT"/>
    <property type="molecule type" value="Genomic_DNA"/>
</dbReference>
<dbReference type="EMBL" id="AP014960">
    <property type="status" value="NOT_ANNOTATED_CDS"/>
    <property type="molecule type" value="Genomic_DNA"/>
</dbReference>
<dbReference type="EMBL" id="AK120923">
    <property type="protein sequence ID" value="BAH00231.1"/>
    <property type="molecule type" value="mRNA"/>
</dbReference>
<dbReference type="RefSeq" id="XP_015637069.1">
    <property type="nucleotide sequence ID" value="XM_015781583.1"/>
</dbReference>
<dbReference type="SMR" id="Q7XUJ2"/>
<dbReference type="FunCoup" id="Q7XUJ2">
    <property type="interactions" value="180"/>
</dbReference>
<dbReference type="STRING" id="39947.Q7XUJ2"/>
<dbReference type="PaxDb" id="39947-Q7XUJ2"/>
<dbReference type="KEGG" id="dosa:Os04g0542200"/>
<dbReference type="eggNOG" id="ENOG502QQ2H">
    <property type="taxonomic scope" value="Eukaryota"/>
</dbReference>
<dbReference type="HOGENOM" id="CLU_015477_2_0_1"/>
<dbReference type="InParanoid" id="Q7XUJ2"/>
<dbReference type="OrthoDB" id="627262at2759"/>
<dbReference type="Proteomes" id="UP000000763">
    <property type="component" value="Chromosome 4"/>
</dbReference>
<dbReference type="Proteomes" id="UP000059680">
    <property type="component" value="Chromosome 4"/>
</dbReference>
<dbReference type="GO" id="GO:0005886">
    <property type="term" value="C:plasma membrane"/>
    <property type="evidence" value="ECO:0000318"/>
    <property type="project" value="GO_Central"/>
</dbReference>
<dbReference type="GO" id="GO:0051980">
    <property type="term" value="F:iron-nicotianamine transmembrane transporter activity"/>
    <property type="evidence" value="ECO:0000318"/>
    <property type="project" value="GO_Central"/>
</dbReference>
<dbReference type="GO" id="GO:0035673">
    <property type="term" value="F:oligopeptide transmembrane transporter activity"/>
    <property type="evidence" value="ECO:0007669"/>
    <property type="project" value="InterPro"/>
</dbReference>
<dbReference type="GO" id="GO:0010039">
    <property type="term" value="P:response to iron ion"/>
    <property type="evidence" value="ECO:0000318"/>
    <property type="project" value="GO_Central"/>
</dbReference>
<dbReference type="GO" id="GO:0048316">
    <property type="term" value="P:seed development"/>
    <property type="evidence" value="ECO:0000318"/>
    <property type="project" value="GO_Central"/>
</dbReference>
<dbReference type="InterPro" id="IPR004813">
    <property type="entry name" value="OPT"/>
</dbReference>
<dbReference type="InterPro" id="IPR045035">
    <property type="entry name" value="YSL-like"/>
</dbReference>
<dbReference type="NCBIfam" id="TIGR00728">
    <property type="entry name" value="OPT_sfam"/>
    <property type="match status" value="1"/>
</dbReference>
<dbReference type="PANTHER" id="PTHR31645:SF4">
    <property type="entry name" value="METAL-NICOTIANAMINE TRANSPORTER YSL3"/>
    <property type="match status" value="1"/>
</dbReference>
<dbReference type="PANTHER" id="PTHR31645">
    <property type="entry name" value="OLIGOPEPTIDE TRANSPORTER YGL114W-RELATED"/>
    <property type="match status" value="1"/>
</dbReference>
<dbReference type="Pfam" id="PF03169">
    <property type="entry name" value="OPT"/>
    <property type="match status" value="1"/>
</dbReference>
<proteinExistence type="evidence at transcript level"/>
<sequence length="684" mass="74258">MKQERRRKRQPGPPRLELVVAHPREEEMAGLDGGGDAEEGATHARGGGGAPPPWREQLTARGLVASLAVGAMYSVIVMKLNLTTGLVPTLNVSAALIAFVVLRGWTQALARLGFAARPFTRQENTVVQTCAVACYSIAVGGGFGSYLLGLNKRTYEMAGEDTEGNVPGSYKEPGIAWMTGFLLAVSFVGLLALVPLRKVMIIDYKLTYPSGTATAVLINGFHTPHGDAMAKQQVNGFTKYFAMSFFWSFFQWFYSGGDNCGFSQFPTFGLKAWQQTFFFDFSLTYVGAGMICSHLVNLSLLLGAILSWGVMWPLISDLKGDWYSADIPESSMKSLQGYKAFICVALILGDGLYNFVKIVALTIKNLFDSSKLKNAKKGEDMPVLDELHRNEVFTTDNIPSWLAFSGYLGLTFIAVIAIPMMFHEMKWYYVVIAYLLAPALGFCNAYGAGLTDINMAYNYGKIALFILAAWAGKDSGVVAGLVGCGLVKSLVSISADLMHDFKTGHLTLTSPRSMIIAQAIGTVMGCVISPLTFFLFYSAFDIGNPEGYWKAPYALVYRNMAILGVEGFSALPQHCLQLCYGFFGFAVAANLTRDLCPPKYGRWVPLPMAMGVPFLVGASFAIDMCIGSLIVFTWHIIDKSKAALMVPAVASGLICGDGLWIFPASLLALAKISPPMCMAFRSTN</sequence>
<keyword id="KW-0472">Membrane</keyword>
<keyword id="KW-1185">Reference proteome</keyword>
<keyword id="KW-0812">Transmembrane</keyword>
<keyword id="KW-1133">Transmembrane helix</keyword>
<keyword id="KW-0813">Transport</keyword>
<name>YSL9_ORYSJ</name>
<reference key="1">
    <citation type="journal article" date="2004" name="Plant J.">
        <title>OsYSL2 is a rice metal-nicotianamine transporter that is regulated by iron and expressed in the phloem.</title>
        <authorList>
            <person name="Koike S."/>
            <person name="Inoue H."/>
            <person name="Mizuno D."/>
            <person name="Takahashi M."/>
            <person name="Nakanishi H."/>
            <person name="Mori S."/>
            <person name="Nishizawa N.K."/>
        </authorList>
    </citation>
    <scope>NUCLEOTIDE SEQUENCE [MRNA]</scope>
    <scope>GENE FAMILY</scope>
    <scope>NOMENCLATURE</scope>
    <source>
        <strain>cv. Nipponbare</strain>
    </source>
</reference>
<reference key="2">
    <citation type="submission" date="2003-12" db="EMBL/GenBank/DDBJ databases">
        <title>Sequence of rice iron transport protein 1 gene.</title>
        <authorList>
            <person name="Zhu Z."/>
        </authorList>
    </citation>
    <scope>NUCLEOTIDE SEQUENCE [MRNA]</scope>
</reference>
<reference key="3">
    <citation type="journal article" date="2002" name="Nature">
        <title>Sequence and analysis of rice chromosome 4.</title>
        <authorList>
            <person name="Feng Q."/>
            <person name="Zhang Y."/>
            <person name="Hao P."/>
            <person name="Wang S."/>
            <person name="Fu G."/>
            <person name="Huang Y."/>
            <person name="Li Y."/>
            <person name="Zhu J."/>
            <person name="Liu Y."/>
            <person name="Hu X."/>
            <person name="Jia P."/>
            <person name="Zhang Y."/>
            <person name="Zhao Q."/>
            <person name="Ying K."/>
            <person name="Yu S."/>
            <person name="Tang Y."/>
            <person name="Weng Q."/>
            <person name="Zhang L."/>
            <person name="Lu Y."/>
            <person name="Mu J."/>
            <person name="Lu Y."/>
            <person name="Zhang L.S."/>
            <person name="Yu Z."/>
            <person name="Fan D."/>
            <person name="Liu X."/>
            <person name="Lu T."/>
            <person name="Li C."/>
            <person name="Wu Y."/>
            <person name="Sun T."/>
            <person name="Lei H."/>
            <person name="Li T."/>
            <person name="Hu H."/>
            <person name="Guan J."/>
            <person name="Wu M."/>
            <person name="Zhang R."/>
            <person name="Zhou B."/>
            <person name="Chen Z."/>
            <person name="Chen L."/>
            <person name="Jin Z."/>
            <person name="Wang R."/>
            <person name="Yin H."/>
            <person name="Cai Z."/>
            <person name="Ren S."/>
            <person name="Lv G."/>
            <person name="Gu W."/>
            <person name="Zhu G."/>
            <person name="Tu Y."/>
            <person name="Jia J."/>
            <person name="Zhang Y."/>
            <person name="Chen J."/>
            <person name="Kang H."/>
            <person name="Chen X."/>
            <person name="Shao C."/>
            <person name="Sun Y."/>
            <person name="Hu Q."/>
            <person name="Zhang X."/>
            <person name="Zhang W."/>
            <person name="Wang L."/>
            <person name="Ding C."/>
            <person name="Sheng H."/>
            <person name="Gu J."/>
            <person name="Chen S."/>
            <person name="Ni L."/>
            <person name="Zhu F."/>
            <person name="Chen W."/>
            <person name="Lan L."/>
            <person name="Lai Y."/>
            <person name="Cheng Z."/>
            <person name="Gu M."/>
            <person name="Jiang J."/>
            <person name="Li J."/>
            <person name="Hong G."/>
            <person name="Xue Y."/>
            <person name="Han B."/>
        </authorList>
    </citation>
    <scope>NUCLEOTIDE SEQUENCE [LARGE SCALE GENOMIC DNA]</scope>
    <source>
        <strain>cv. Nipponbare</strain>
    </source>
</reference>
<reference key="4">
    <citation type="journal article" date="2005" name="Nature">
        <title>The map-based sequence of the rice genome.</title>
        <authorList>
            <consortium name="International rice genome sequencing project (IRGSP)"/>
        </authorList>
    </citation>
    <scope>NUCLEOTIDE SEQUENCE [LARGE SCALE GENOMIC DNA]</scope>
    <source>
        <strain>cv. Nipponbare</strain>
    </source>
</reference>
<reference key="5">
    <citation type="journal article" date="2008" name="Nucleic Acids Res.">
        <title>The rice annotation project database (RAP-DB): 2008 update.</title>
        <authorList>
            <consortium name="The rice annotation project (RAP)"/>
        </authorList>
    </citation>
    <scope>GENOME REANNOTATION</scope>
    <source>
        <strain>cv. Nipponbare</strain>
    </source>
</reference>
<reference key="6">
    <citation type="journal article" date="2013" name="Rice">
        <title>Improvement of the Oryza sativa Nipponbare reference genome using next generation sequence and optical map data.</title>
        <authorList>
            <person name="Kawahara Y."/>
            <person name="de la Bastide M."/>
            <person name="Hamilton J.P."/>
            <person name="Kanamori H."/>
            <person name="McCombie W.R."/>
            <person name="Ouyang S."/>
            <person name="Schwartz D.C."/>
            <person name="Tanaka T."/>
            <person name="Wu J."/>
            <person name="Zhou S."/>
            <person name="Childs K.L."/>
            <person name="Davidson R.M."/>
            <person name="Lin H."/>
            <person name="Quesada-Ocampo L."/>
            <person name="Vaillancourt B."/>
            <person name="Sakai H."/>
            <person name="Lee S.S."/>
            <person name="Kim J."/>
            <person name="Numa H."/>
            <person name="Itoh T."/>
            <person name="Buell C.R."/>
            <person name="Matsumoto T."/>
        </authorList>
    </citation>
    <scope>GENOME REANNOTATION</scope>
    <source>
        <strain>cv. Nipponbare</strain>
    </source>
</reference>
<reference key="7">
    <citation type="journal article" date="2003" name="Science">
        <title>Collection, mapping, and annotation of over 28,000 cDNA clones from japonica rice.</title>
        <authorList>
            <consortium name="The rice full-length cDNA consortium"/>
        </authorList>
    </citation>
    <scope>NUCLEOTIDE SEQUENCE [LARGE SCALE MRNA]</scope>
    <source>
        <strain>cv. Nipponbare</strain>
    </source>
</reference>